<name>OSTC_DANRE</name>
<dbReference type="EMBL" id="BC049047">
    <property type="protein sequence ID" value="AAH49047.1"/>
    <property type="molecule type" value="mRNA"/>
</dbReference>
<dbReference type="EMBL" id="BC071319">
    <property type="protein sequence ID" value="AAH71319.1"/>
    <property type="molecule type" value="mRNA"/>
</dbReference>
<dbReference type="RefSeq" id="NP_956563.1">
    <property type="nucleotide sequence ID" value="NM_200269.2"/>
</dbReference>
<dbReference type="SMR" id="Q7ZWJ3"/>
<dbReference type="FunCoup" id="Q7ZWJ3">
    <property type="interactions" value="1083"/>
</dbReference>
<dbReference type="STRING" id="7955.ENSDARP00000130235"/>
<dbReference type="PaxDb" id="7955-ENSDARP00000052004"/>
<dbReference type="GeneID" id="393239"/>
<dbReference type="KEGG" id="dre:393239"/>
<dbReference type="AGR" id="ZFIN:ZDB-GENE-040426-1079"/>
<dbReference type="CTD" id="58505"/>
<dbReference type="ZFIN" id="ZDB-GENE-040426-1079">
    <property type="gene designation" value="ostc"/>
</dbReference>
<dbReference type="eggNOG" id="KOG3356">
    <property type="taxonomic scope" value="Eukaryota"/>
</dbReference>
<dbReference type="InParanoid" id="Q7ZWJ3"/>
<dbReference type="OrthoDB" id="10256333at2759"/>
<dbReference type="PhylomeDB" id="Q7ZWJ3"/>
<dbReference type="TreeFam" id="TF323315"/>
<dbReference type="UniPathway" id="UPA00378"/>
<dbReference type="PRO" id="PR:Q7ZWJ3"/>
<dbReference type="Proteomes" id="UP000000437">
    <property type="component" value="Chromosome 7"/>
</dbReference>
<dbReference type="GO" id="GO:0008250">
    <property type="term" value="C:oligosaccharyltransferase complex"/>
    <property type="evidence" value="ECO:0000318"/>
    <property type="project" value="GO_Central"/>
</dbReference>
<dbReference type="GO" id="GO:0006486">
    <property type="term" value="P:protein glycosylation"/>
    <property type="evidence" value="ECO:0007669"/>
    <property type="project" value="UniProtKB-UniPathway"/>
</dbReference>
<dbReference type="InterPro" id="IPR021149">
    <property type="entry name" value="OligosaccharylTrfase_OST3/OST6"/>
</dbReference>
<dbReference type="InterPro" id="IPR042416">
    <property type="entry name" value="OSTC"/>
</dbReference>
<dbReference type="PANTHER" id="PTHR13160">
    <property type="entry name" value="OLIGOSACCHARYLTRANSFERASE COMPLEX SUBUNIT OSTC"/>
    <property type="match status" value="1"/>
</dbReference>
<dbReference type="PANTHER" id="PTHR13160:SF4">
    <property type="entry name" value="OLIGOSACCHARYLTRANSFERASE COMPLEX SUBUNIT OSTC"/>
    <property type="match status" value="1"/>
</dbReference>
<dbReference type="Pfam" id="PF04756">
    <property type="entry name" value="OST3_OST6"/>
    <property type="match status" value="1"/>
</dbReference>
<gene>
    <name evidence="2" type="primary">ostc</name>
    <name type="ORF">zgc:56559</name>
</gene>
<comment type="function">
    <text evidence="2">Specific component of the STT3A-containing form of the oligosaccharyl transferase (OST) complex that catalyzes the initial transfer of a defined glycan (Glc(3)Man(9)GlcNAc(2) in eukaryotes) from the lipid carrier dolichol-pyrophosphate to an asparagine residue within an Asn-X-Ser/Thr consensus motif in nascent polypeptide chains, the first step in protein N-glycosylation. N-glycosylation occurs cotranslationally and the complex associates with the Sec61 complex at the channel-forming translocon complex that mediates protein translocation across the endoplasmic reticulum (ER). All subunits are required for a maximal enzyme activity.</text>
</comment>
<comment type="pathway">
    <text evidence="2">Protein modification; protein glycosylation.</text>
</comment>
<comment type="subunit">
    <text evidence="1">Specific component of the STT3A-containing form of the oligosaccharyltransferase (OST) complex.</text>
</comment>
<comment type="subcellular location">
    <subcellularLocation>
        <location evidence="4">Membrane</location>
        <topology evidence="4">Multi-pass membrane protein</topology>
    </subcellularLocation>
</comment>
<comment type="similarity">
    <text evidence="4">Belongs to the OSTC family.</text>
</comment>
<keyword id="KW-0472">Membrane</keyword>
<keyword id="KW-1185">Reference proteome</keyword>
<keyword id="KW-0812">Transmembrane</keyword>
<keyword id="KW-1133">Transmembrane helix</keyword>
<reference key="1">
    <citation type="submission" date="2004-06" db="EMBL/GenBank/DDBJ databases">
        <authorList>
            <consortium name="NIH - Zebrafish Gene Collection (ZGC) project"/>
        </authorList>
    </citation>
    <scope>NUCLEOTIDE SEQUENCE [LARGE SCALE MRNA]</scope>
    <source>
        <strain>SJD</strain>
        <tissue>Embryo</tissue>
    </source>
</reference>
<feature type="chain" id="PRO_0000320605" description="Oligosaccharyltransferase complex subunit ostc">
    <location>
        <begin position="1"/>
        <end position="149"/>
    </location>
</feature>
<feature type="topological domain" description="Cytoplasmic" evidence="3">
    <location>
        <begin position="1"/>
        <end position="32"/>
    </location>
</feature>
<feature type="transmembrane region" description="Helical" evidence="3">
    <location>
        <begin position="33"/>
        <end position="53"/>
    </location>
</feature>
<feature type="topological domain" description="Extracellular" evidence="3">
    <location>
        <begin position="54"/>
        <end position="83"/>
    </location>
</feature>
<feature type="transmembrane region" description="Helical" evidence="3">
    <location>
        <begin position="84"/>
        <end position="104"/>
    </location>
</feature>
<feature type="topological domain" description="Cytoplasmic" evidence="3">
    <location>
        <begin position="105"/>
        <end position="117"/>
    </location>
</feature>
<feature type="transmembrane region" description="Helical" evidence="3">
    <location>
        <begin position="118"/>
        <end position="138"/>
    </location>
</feature>
<feature type="topological domain" description="Extracellular" evidence="3">
    <location>
        <begin position="139"/>
        <end position="149"/>
    </location>
</feature>
<feature type="sequence conflict" description="In Ref. 1; AAH71319." evidence="4" ref="1">
    <original>L</original>
    <variation>I</variation>
    <location>
        <position position="4"/>
    </location>
</feature>
<protein>
    <recommendedName>
        <fullName evidence="2">Oligosaccharyltransferase complex subunit ostc</fullName>
    </recommendedName>
</protein>
<accession>Q7ZWJ3</accession>
<accession>Q6IQT5</accession>
<evidence type="ECO:0000250" key="1">
    <source>
        <dbReference type="UniProtKB" id="P86218"/>
    </source>
</evidence>
<evidence type="ECO:0000250" key="2">
    <source>
        <dbReference type="UniProtKB" id="Q9NRP0"/>
    </source>
</evidence>
<evidence type="ECO:0000255" key="3"/>
<evidence type="ECO:0000305" key="4"/>
<proteinExistence type="evidence at transcript level"/>
<organism>
    <name type="scientific">Danio rerio</name>
    <name type="common">Zebrafish</name>
    <name type="synonym">Brachydanio rerio</name>
    <dbReference type="NCBI Taxonomy" id="7955"/>
    <lineage>
        <taxon>Eukaryota</taxon>
        <taxon>Metazoa</taxon>
        <taxon>Chordata</taxon>
        <taxon>Craniata</taxon>
        <taxon>Vertebrata</taxon>
        <taxon>Euteleostomi</taxon>
        <taxon>Actinopterygii</taxon>
        <taxon>Neopterygii</taxon>
        <taxon>Teleostei</taxon>
        <taxon>Ostariophysi</taxon>
        <taxon>Cypriniformes</taxon>
        <taxon>Danionidae</taxon>
        <taxon>Danioninae</taxon>
        <taxon>Danio</taxon>
    </lineage>
</organism>
<sequence>METLFSLPFTVLECPNVKLKKPSWLHMPSAMTVYAVVIVSYFLITGGIIYDVIVEPPSVGSMTDEHGHQRPVAFLAYRVNGQYIMEGLASSFLFTMGGLGFIILDRSNAPNIPKLNRFLLLFIGFVSVLLSFFMARVFMRMKLPGYLMG</sequence>